<sequence>MQKILDTLYQGKNINQKQSEALLHSIIKEKLSAIQIASALISMKIRGETFEEIIGAVNILLTHAKPFPRPNSLFADITGTGGDNSNTINISTTSAIVAATCGAKIIKHGNRSISSLTGSMDLLKQHCLILNSPQQARKNFDELGICFLYAPQYYTVLHRIMPIRKQLKIPTLFNIVGPLINPSKPPLTLIGVYKKELLSPIIRILQLLKYNHAIVVHCGGIDEVGLHSPTHIAELHNSIINNYILTASDFGLDSYPIEILRCYSRKQAREYMINILKGRGKPAHSAVIAANVALLLKLFGYTDLRANAQLALEKIHYGIPYTLLSSLSETKIQNHATHNTR</sequence>
<protein>
    <recommendedName>
        <fullName evidence="1">Anthranilate phosphoribosyltransferase</fullName>
        <ecNumber evidence="1">2.4.2.18</ecNumber>
    </recommendedName>
</protein>
<organism>
    <name type="scientific">Blochmanniella pennsylvanica (strain BPEN)</name>
    <dbReference type="NCBI Taxonomy" id="291272"/>
    <lineage>
        <taxon>Bacteria</taxon>
        <taxon>Pseudomonadati</taxon>
        <taxon>Pseudomonadota</taxon>
        <taxon>Gammaproteobacteria</taxon>
        <taxon>Enterobacterales</taxon>
        <taxon>Enterobacteriaceae</taxon>
        <taxon>ant endosymbionts</taxon>
        <taxon>Candidatus Blochmanniella</taxon>
    </lineage>
</organism>
<proteinExistence type="inferred from homology"/>
<feature type="chain" id="PRO_1000099784" description="Anthranilate phosphoribosyltransferase">
    <location>
        <begin position="1"/>
        <end position="341"/>
    </location>
</feature>
<feature type="binding site" evidence="1">
    <location>
        <position position="79"/>
    </location>
    <ligand>
        <name>5-phospho-alpha-D-ribose 1-diphosphate</name>
        <dbReference type="ChEBI" id="CHEBI:58017"/>
    </ligand>
</feature>
<feature type="binding site" evidence="1">
    <location>
        <position position="79"/>
    </location>
    <ligand>
        <name>anthranilate</name>
        <dbReference type="ChEBI" id="CHEBI:16567"/>
        <label>1</label>
    </ligand>
</feature>
<feature type="binding site" evidence="1">
    <location>
        <begin position="82"/>
        <end position="83"/>
    </location>
    <ligand>
        <name>5-phospho-alpha-D-ribose 1-diphosphate</name>
        <dbReference type="ChEBI" id="CHEBI:58017"/>
    </ligand>
</feature>
<feature type="binding site" evidence="1">
    <location>
        <position position="87"/>
    </location>
    <ligand>
        <name>5-phospho-alpha-D-ribose 1-diphosphate</name>
        <dbReference type="ChEBI" id="CHEBI:58017"/>
    </ligand>
</feature>
<feature type="binding site" evidence="1">
    <location>
        <begin position="89"/>
        <end position="92"/>
    </location>
    <ligand>
        <name>5-phospho-alpha-D-ribose 1-diphosphate</name>
        <dbReference type="ChEBI" id="CHEBI:58017"/>
    </ligand>
</feature>
<feature type="binding site" evidence="1">
    <location>
        <position position="91"/>
    </location>
    <ligand>
        <name>Mg(2+)</name>
        <dbReference type="ChEBI" id="CHEBI:18420"/>
        <label>1</label>
    </ligand>
</feature>
<feature type="binding site" evidence="1">
    <location>
        <begin position="107"/>
        <end position="115"/>
    </location>
    <ligand>
        <name>5-phospho-alpha-D-ribose 1-diphosphate</name>
        <dbReference type="ChEBI" id="CHEBI:58017"/>
    </ligand>
</feature>
<feature type="binding site" evidence="1">
    <location>
        <position position="110"/>
    </location>
    <ligand>
        <name>anthranilate</name>
        <dbReference type="ChEBI" id="CHEBI:16567"/>
        <label>1</label>
    </ligand>
</feature>
<feature type="binding site" evidence="1">
    <location>
        <position position="119"/>
    </location>
    <ligand>
        <name>5-phospho-alpha-D-ribose 1-diphosphate</name>
        <dbReference type="ChEBI" id="CHEBI:58017"/>
    </ligand>
</feature>
<feature type="binding site" evidence="1">
    <location>
        <position position="164"/>
    </location>
    <ligand>
        <name>anthranilate</name>
        <dbReference type="ChEBI" id="CHEBI:16567"/>
        <label>2</label>
    </ligand>
</feature>
<feature type="binding site" evidence="1">
    <location>
        <position position="222"/>
    </location>
    <ligand>
        <name>Mg(2+)</name>
        <dbReference type="ChEBI" id="CHEBI:18420"/>
        <label>2</label>
    </ligand>
</feature>
<feature type="binding site" evidence="1">
    <location>
        <position position="223"/>
    </location>
    <ligand>
        <name>Mg(2+)</name>
        <dbReference type="ChEBI" id="CHEBI:18420"/>
        <label>1</label>
    </ligand>
</feature>
<feature type="binding site" evidence="1">
    <location>
        <position position="223"/>
    </location>
    <ligand>
        <name>Mg(2+)</name>
        <dbReference type="ChEBI" id="CHEBI:18420"/>
        <label>2</label>
    </ligand>
</feature>
<comment type="function">
    <text evidence="1">Catalyzes the transfer of the phosphoribosyl group of 5-phosphorylribose-1-pyrophosphate (PRPP) to anthranilate to yield N-(5'-phosphoribosyl)-anthranilate (PRA).</text>
</comment>
<comment type="catalytic activity">
    <reaction evidence="1">
        <text>N-(5-phospho-beta-D-ribosyl)anthranilate + diphosphate = 5-phospho-alpha-D-ribose 1-diphosphate + anthranilate</text>
        <dbReference type="Rhea" id="RHEA:11768"/>
        <dbReference type="ChEBI" id="CHEBI:16567"/>
        <dbReference type="ChEBI" id="CHEBI:18277"/>
        <dbReference type="ChEBI" id="CHEBI:33019"/>
        <dbReference type="ChEBI" id="CHEBI:58017"/>
        <dbReference type="EC" id="2.4.2.18"/>
    </reaction>
</comment>
<comment type="cofactor">
    <cofactor evidence="1">
        <name>Mg(2+)</name>
        <dbReference type="ChEBI" id="CHEBI:18420"/>
    </cofactor>
    <text evidence="1">Binds 2 magnesium ions per monomer.</text>
</comment>
<comment type="pathway">
    <text evidence="1">Amino-acid biosynthesis; L-tryptophan biosynthesis; L-tryptophan from chorismate: step 2/5.</text>
</comment>
<comment type="subunit">
    <text evidence="1">Homodimer.</text>
</comment>
<comment type="similarity">
    <text evidence="1">Belongs to the anthranilate phosphoribosyltransferase family.</text>
</comment>
<reference key="1">
    <citation type="journal article" date="2005" name="Genome Res.">
        <title>Genome sequence of Blochmannia pennsylvanicus indicates parallel evolutionary trends among bacterial mutualists of insects.</title>
        <authorList>
            <person name="Degnan P.H."/>
            <person name="Lazarus A.B."/>
            <person name="Wernegreen J.J."/>
        </authorList>
    </citation>
    <scope>NUCLEOTIDE SEQUENCE [LARGE SCALE GENOMIC DNA]</scope>
    <source>
        <strain>BPEN</strain>
    </source>
</reference>
<keyword id="KW-0028">Amino-acid biosynthesis</keyword>
<keyword id="KW-0057">Aromatic amino acid biosynthesis</keyword>
<keyword id="KW-0328">Glycosyltransferase</keyword>
<keyword id="KW-0460">Magnesium</keyword>
<keyword id="KW-0479">Metal-binding</keyword>
<keyword id="KW-1185">Reference proteome</keyword>
<keyword id="KW-0808">Transferase</keyword>
<keyword id="KW-0822">Tryptophan biosynthesis</keyword>
<name>TRPD_BLOPB</name>
<gene>
    <name evidence="1" type="primary">trpD</name>
    <name type="ordered locus">BPEN_440</name>
</gene>
<dbReference type="EC" id="2.4.2.18" evidence="1"/>
<dbReference type="EMBL" id="CP000016">
    <property type="protein sequence ID" value="AAZ41059.1"/>
    <property type="molecule type" value="Genomic_DNA"/>
</dbReference>
<dbReference type="RefSeq" id="WP_011282969.1">
    <property type="nucleotide sequence ID" value="NC_007292.1"/>
</dbReference>
<dbReference type="SMR" id="Q494D8"/>
<dbReference type="STRING" id="291272.BPEN_440"/>
<dbReference type="KEGG" id="bpn:BPEN_440"/>
<dbReference type="eggNOG" id="COG0547">
    <property type="taxonomic scope" value="Bacteria"/>
</dbReference>
<dbReference type="HOGENOM" id="CLU_034315_3_0_6"/>
<dbReference type="OrthoDB" id="9806430at2"/>
<dbReference type="UniPathway" id="UPA00035">
    <property type="reaction ID" value="UER00041"/>
</dbReference>
<dbReference type="Proteomes" id="UP000007794">
    <property type="component" value="Chromosome"/>
</dbReference>
<dbReference type="GO" id="GO:0005829">
    <property type="term" value="C:cytosol"/>
    <property type="evidence" value="ECO:0007669"/>
    <property type="project" value="TreeGrafter"/>
</dbReference>
<dbReference type="GO" id="GO:0004048">
    <property type="term" value="F:anthranilate phosphoribosyltransferase activity"/>
    <property type="evidence" value="ECO:0007669"/>
    <property type="project" value="UniProtKB-UniRule"/>
</dbReference>
<dbReference type="GO" id="GO:0000287">
    <property type="term" value="F:magnesium ion binding"/>
    <property type="evidence" value="ECO:0007669"/>
    <property type="project" value="UniProtKB-UniRule"/>
</dbReference>
<dbReference type="GO" id="GO:0000162">
    <property type="term" value="P:L-tryptophan biosynthetic process"/>
    <property type="evidence" value="ECO:0007669"/>
    <property type="project" value="UniProtKB-UniRule"/>
</dbReference>
<dbReference type="Gene3D" id="3.40.1030.10">
    <property type="entry name" value="Nucleoside phosphorylase/phosphoribosyltransferase catalytic domain"/>
    <property type="match status" value="1"/>
</dbReference>
<dbReference type="Gene3D" id="1.20.970.10">
    <property type="entry name" value="Transferase, Pyrimidine Nucleoside Phosphorylase, Chain C"/>
    <property type="match status" value="1"/>
</dbReference>
<dbReference type="HAMAP" id="MF_00211">
    <property type="entry name" value="TrpD"/>
    <property type="match status" value="1"/>
</dbReference>
<dbReference type="InterPro" id="IPR005940">
    <property type="entry name" value="Anthranilate_Pribosyl_Tfrase"/>
</dbReference>
<dbReference type="InterPro" id="IPR000312">
    <property type="entry name" value="Glycosyl_Trfase_fam3"/>
</dbReference>
<dbReference type="InterPro" id="IPR017459">
    <property type="entry name" value="Glycosyl_Trfase_fam3_N_dom"/>
</dbReference>
<dbReference type="InterPro" id="IPR036320">
    <property type="entry name" value="Glycosyl_Trfase_fam3_N_dom_sf"/>
</dbReference>
<dbReference type="InterPro" id="IPR035902">
    <property type="entry name" value="Nuc_phospho_transferase"/>
</dbReference>
<dbReference type="NCBIfam" id="TIGR01245">
    <property type="entry name" value="trpD"/>
    <property type="match status" value="1"/>
</dbReference>
<dbReference type="PANTHER" id="PTHR43285">
    <property type="entry name" value="ANTHRANILATE PHOSPHORIBOSYLTRANSFERASE"/>
    <property type="match status" value="1"/>
</dbReference>
<dbReference type="PANTHER" id="PTHR43285:SF2">
    <property type="entry name" value="ANTHRANILATE PHOSPHORIBOSYLTRANSFERASE"/>
    <property type="match status" value="1"/>
</dbReference>
<dbReference type="Pfam" id="PF02885">
    <property type="entry name" value="Glycos_trans_3N"/>
    <property type="match status" value="1"/>
</dbReference>
<dbReference type="Pfam" id="PF00591">
    <property type="entry name" value="Glycos_transf_3"/>
    <property type="match status" value="1"/>
</dbReference>
<dbReference type="SUPFAM" id="SSF52418">
    <property type="entry name" value="Nucleoside phosphorylase/phosphoribosyltransferase catalytic domain"/>
    <property type="match status" value="1"/>
</dbReference>
<dbReference type="SUPFAM" id="SSF47648">
    <property type="entry name" value="Nucleoside phosphorylase/phosphoribosyltransferase N-terminal domain"/>
    <property type="match status" value="1"/>
</dbReference>
<evidence type="ECO:0000255" key="1">
    <source>
        <dbReference type="HAMAP-Rule" id="MF_00211"/>
    </source>
</evidence>
<accession>Q494D8</accession>